<dbReference type="EMBL" id="CP000492">
    <property type="protein sequence ID" value="ABL65208.1"/>
    <property type="molecule type" value="Genomic_DNA"/>
</dbReference>
<dbReference type="RefSeq" id="WP_011745032.1">
    <property type="nucleotide sequence ID" value="NC_008639.1"/>
</dbReference>
<dbReference type="SMR" id="A1BFN1"/>
<dbReference type="STRING" id="290317.Cpha266_1171"/>
<dbReference type="KEGG" id="cph:Cpha266_1171"/>
<dbReference type="eggNOG" id="COG0718">
    <property type="taxonomic scope" value="Bacteria"/>
</dbReference>
<dbReference type="HOGENOM" id="CLU_140930_0_1_10"/>
<dbReference type="OrthoDB" id="9808738at2"/>
<dbReference type="Proteomes" id="UP000008701">
    <property type="component" value="Chromosome"/>
</dbReference>
<dbReference type="GO" id="GO:0043590">
    <property type="term" value="C:bacterial nucleoid"/>
    <property type="evidence" value="ECO:0007669"/>
    <property type="project" value="UniProtKB-UniRule"/>
</dbReference>
<dbReference type="GO" id="GO:0005829">
    <property type="term" value="C:cytosol"/>
    <property type="evidence" value="ECO:0007669"/>
    <property type="project" value="TreeGrafter"/>
</dbReference>
<dbReference type="GO" id="GO:0003677">
    <property type="term" value="F:DNA binding"/>
    <property type="evidence" value="ECO:0007669"/>
    <property type="project" value="UniProtKB-UniRule"/>
</dbReference>
<dbReference type="Gene3D" id="3.30.1310.10">
    <property type="entry name" value="Nucleoid-associated protein YbaB-like domain"/>
    <property type="match status" value="1"/>
</dbReference>
<dbReference type="HAMAP" id="MF_00274">
    <property type="entry name" value="DNA_YbaB_EbfC"/>
    <property type="match status" value="1"/>
</dbReference>
<dbReference type="InterPro" id="IPR036894">
    <property type="entry name" value="YbaB-like_sf"/>
</dbReference>
<dbReference type="InterPro" id="IPR004401">
    <property type="entry name" value="YbaB/EbfC"/>
</dbReference>
<dbReference type="NCBIfam" id="TIGR00103">
    <property type="entry name" value="DNA_YbaB_EbfC"/>
    <property type="match status" value="1"/>
</dbReference>
<dbReference type="PANTHER" id="PTHR33449">
    <property type="entry name" value="NUCLEOID-ASSOCIATED PROTEIN YBAB"/>
    <property type="match status" value="1"/>
</dbReference>
<dbReference type="PANTHER" id="PTHR33449:SF1">
    <property type="entry name" value="NUCLEOID-ASSOCIATED PROTEIN YBAB"/>
    <property type="match status" value="1"/>
</dbReference>
<dbReference type="Pfam" id="PF02575">
    <property type="entry name" value="YbaB_DNA_bd"/>
    <property type="match status" value="1"/>
</dbReference>
<dbReference type="PIRSF" id="PIRSF004555">
    <property type="entry name" value="UCP004555"/>
    <property type="match status" value="1"/>
</dbReference>
<dbReference type="SUPFAM" id="SSF82607">
    <property type="entry name" value="YbaB-like"/>
    <property type="match status" value="1"/>
</dbReference>
<feature type="chain" id="PRO_1000003722" description="Nucleoid-associated protein Cpha266_1171">
    <location>
        <begin position="1"/>
        <end position="111"/>
    </location>
</feature>
<proteinExistence type="inferred from homology"/>
<reference key="1">
    <citation type="submission" date="2006-12" db="EMBL/GenBank/DDBJ databases">
        <title>Complete sequence of Chlorobium phaeobacteroides DSM 266.</title>
        <authorList>
            <consortium name="US DOE Joint Genome Institute"/>
            <person name="Copeland A."/>
            <person name="Lucas S."/>
            <person name="Lapidus A."/>
            <person name="Barry K."/>
            <person name="Detter J.C."/>
            <person name="Glavina del Rio T."/>
            <person name="Hammon N."/>
            <person name="Israni S."/>
            <person name="Pitluck S."/>
            <person name="Goltsman E."/>
            <person name="Schmutz J."/>
            <person name="Larimer F."/>
            <person name="Land M."/>
            <person name="Hauser L."/>
            <person name="Mikhailova N."/>
            <person name="Li T."/>
            <person name="Overmann J."/>
            <person name="Bryant D.A."/>
            <person name="Richardson P."/>
        </authorList>
    </citation>
    <scope>NUCLEOTIDE SEQUENCE [LARGE SCALE GENOMIC DNA]</scope>
    <source>
        <strain>DSM 266 / SMG 266 / 2430</strain>
    </source>
</reference>
<keyword id="KW-0963">Cytoplasm</keyword>
<keyword id="KW-0238">DNA-binding</keyword>
<keyword id="KW-1185">Reference proteome</keyword>
<comment type="function">
    <text evidence="1">Binds to DNA and alters its conformation. May be involved in regulation of gene expression, nucleoid organization and DNA protection.</text>
</comment>
<comment type="subunit">
    <text evidence="1">Homodimer.</text>
</comment>
<comment type="subcellular location">
    <subcellularLocation>
        <location evidence="1">Cytoplasm</location>
        <location evidence="1">Nucleoid</location>
    </subcellularLocation>
</comment>
<comment type="similarity">
    <text evidence="1">Belongs to the YbaB/EbfC family.</text>
</comment>
<sequence length="111" mass="11900">MGMPNLGDMMKQIQQAGEKMQDVQKQLEKIVAYGEAGGGMVKVSVNGKQKLLTLQIDPDIMDDAEMVQDLVIAAVNSALDEAAKVAQEELVKVTGGMMNPADILKNLNLGK</sequence>
<gene>
    <name type="ordered locus">Cpha266_1171</name>
</gene>
<evidence type="ECO:0000255" key="1">
    <source>
        <dbReference type="HAMAP-Rule" id="MF_00274"/>
    </source>
</evidence>
<accession>A1BFN1</accession>
<organism>
    <name type="scientific">Chlorobium phaeobacteroides (strain DSM 266 / SMG 266 / 2430)</name>
    <dbReference type="NCBI Taxonomy" id="290317"/>
    <lineage>
        <taxon>Bacteria</taxon>
        <taxon>Pseudomonadati</taxon>
        <taxon>Chlorobiota</taxon>
        <taxon>Chlorobiia</taxon>
        <taxon>Chlorobiales</taxon>
        <taxon>Chlorobiaceae</taxon>
        <taxon>Chlorobium/Pelodictyon group</taxon>
        <taxon>Chlorobium</taxon>
    </lineage>
</organism>
<protein>
    <recommendedName>
        <fullName evidence="1">Nucleoid-associated protein Cpha266_1171</fullName>
    </recommendedName>
</protein>
<name>Y1171_CHLPD</name>